<proteinExistence type="inferred from homology"/>
<reference key="1">
    <citation type="journal article" date="2000" name="Nature">
        <title>Complete DNA sequence of a serogroup A strain of Neisseria meningitidis Z2491.</title>
        <authorList>
            <person name="Parkhill J."/>
            <person name="Achtman M."/>
            <person name="James K.D."/>
            <person name="Bentley S.D."/>
            <person name="Churcher C.M."/>
            <person name="Klee S.R."/>
            <person name="Morelli G."/>
            <person name="Basham D."/>
            <person name="Brown D."/>
            <person name="Chillingworth T."/>
            <person name="Davies R.M."/>
            <person name="Davis P."/>
            <person name="Devlin K."/>
            <person name="Feltwell T."/>
            <person name="Hamlin N."/>
            <person name="Holroyd S."/>
            <person name="Jagels K."/>
            <person name="Leather S."/>
            <person name="Moule S."/>
            <person name="Mungall K.L."/>
            <person name="Quail M.A."/>
            <person name="Rajandream M.A."/>
            <person name="Rutherford K.M."/>
            <person name="Simmonds M."/>
            <person name="Skelton J."/>
            <person name="Whitehead S."/>
            <person name="Spratt B.G."/>
            <person name="Barrell B.G."/>
        </authorList>
    </citation>
    <scope>NUCLEOTIDE SEQUENCE [LARGE SCALE GENOMIC DNA]</scope>
    <source>
        <strain>DSM 15465 / Z2491</strain>
    </source>
</reference>
<protein>
    <recommendedName>
        <fullName evidence="1">Elongation factor 4</fullName>
        <shortName evidence="1">EF-4</shortName>
        <ecNumber evidence="1">3.6.5.n1</ecNumber>
    </recommendedName>
    <alternativeName>
        <fullName evidence="1">Ribosomal back-translocase LepA</fullName>
    </alternativeName>
</protein>
<organism>
    <name type="scientific">Neisseria meningitidis serogroup A / serotype 4A (strain DSM 15465 / Z2491)</name>
    <dbReference type="NCBI Taxonomy" id="122587"/>
    <lineage>
        <taxon>Bacteria</taxon>
        <taxon>Pseudomonadati</taxon>
        <taxon>Pseudomonadota</taxon>
        <taxon>Betaproteobacteria</taxon>
        <taxon>Neisseriales</taxon>
        <taxon>Neisseriaceae</taxon>
        <taxon>Neisseria</taxon>
    </lineage>
</organism>
<comment type="function">
    <text evidence="1">Required for accurate and efficient protein synthesis under certain stress conditions. May act as a fidelity factor of the translation reaction, by catalyzing a one-codon backward translocation of tRNAs on improperly translocated ribosomes. Back-translocation proceeds from a post-translocation (POST) complex to a pre-translocation (PRE) complex, thus giving elongation factor G a second chance to translocate the tRNAs correctly. Binds to ribosomes in a GTP-dependent manner.</text>
</comment>
<comment type="catalytic activity">
    <reaction evidence="1">
        <text>GTP + H2O = GDP + phosphate + H(+)</text>
        <dbReference type="Rhea" id="RHEA:19669"/>
        <dbReference type="ChEBI" id="CHEBI:15377"/>
        <dbReference type="ChEBI" id="CHEBI:15378"/>
        <dbReference type="ChEBI" id="CHEBI:37565"/>
        <dbReference type="ChEBI" id="CHEBI:43474"/>
        <dbReference type="ChEBI" id="CHEBI:58189"/>
        <dbReference type="EC" id="3.6.5.n1"/>
    </reaction>
</comment>
<comment type="subcellular location">
    <subcellularLocation>
        <location evidence="1">Cell inner membrane</location>
        <topology evidence="1">Peripheral membrane protein</topology>
        <orientation evidence="1">Cytoplasmic side</orientation>
    </subcellularLocation>
</comment>
<comment type="similarity">
    <text evidence="1">Belongs to the TRAFAC class translation factor GTPase superfamily. Classic translation factor GTPase family. LepA subfamily.</text>
</comment>
<dbReference type="EC" id="3.6.5.n1" evidence="1"/>
<dbReference type="EMBL" id="AL157959">
    <property type="protein sequence ID" value="CAM08201.1"/>
    <property type="molecule type" value="Genomic_DNA"/>
</dbReference>
<dbReference type="PIR" id="H81944">
    <property type="entry name" value="H81944"/>
</dbReference>
<dbReference type="RefSeq" id="WP_002236845.1">
    <property type="nucleotide sequence ID" value="NC_003116.1"/>
</dbReference>
<dbReference type="SMR" id="Q9JV65"/>
<dbReference type="EnsemblBacteria" id="CAM08201">
    <property type="protein sequence ID" value="CAM08201"/>
    <property type="gene ID" value="NMA0977"/>
</dbReference>
<dbReference type="GeneID" id="93386405"/>
<dbReference type="KEGG" id="nma:NMA0977"/>
<dbReference type="HOGENOM" id="CLU_009995_3_3_4"/>
<dbReference type="Proteomes" id="UP000000626">
    <property type="component" value="Chromosome"/>
</dbReference>
<dbReference type="GO" id="GO:0005886">
    <property type="term" value="C:plasma membrane"/>
    <property type="evidence" value="ECO:0007669"/>
    <property type="project" value="UniProtKB-SubCell"/>
</dbReference>
<dbReference type="GO" id="GO:0005525">
    <property type="term" value="F:GTP binding"/>
    <property type="evidence" value="ECO:0007669"/>
    <property type="project" value="UniProtKB-UniRule"/>
</dbReference>
<dbReference type="GO" id="GO:0003924">
    <property type="term" value="F:GTPase activity"/>
    <property type="evidence" value="ECO:0007669"/>
    <property type="project" value="UniProtKB-UniRule"/>
</dbReference>
<dbReference type="GO" id="GO:0097216">
    <property type="term" value="F:guanosine tetraphosphate binding"/>
    <property type="evidence" value="ECO:0007669"/>
    <property type="project" value="UniProtKB-ARBA"/>
</dbReference>
<dbReference type="GO" id="GO:0043022">
    <property type="term" value="F:ribosome binding"/>
    <property type="evidence" value="ECO:0007669"/>
    <property type="project" value="UniProtKB-UniRule"/>
</dbReference>
<dbReference type="GO" id="GO:0003746">
    <property type="term" value="F:translation elongation factor activity"/>
    <property type="evidence" value="ECO:0007669"/>
    <property type="project" value="UniProtKB-UniRule"/>
</dbReference>
<dbReference type="GO" id="GO:0045727">
    <property type="term" value="P:positive regulation of translation"/>
    <property type="evidence" value="ECO:0007669"/>
    <property type="project" value="UniProtKB-UniRule"/>
</dbReference>
<dbReference type="CDD" id="cd03699">
    <property type="entry name" value="EF4_II"/>
    <property type="match status" value="1"/>
</dbReference>
<dbReference type="CDD" id="cd16260">
    <property type="entry name" value="EF4_III"/>
    <property type="match status" value="1"/>
</dbReference>
<dbReference type="CDD" id="cd01890">
    <property type="entry name" value="LepA"/>
    <property type="match status" value="1"/>
</dbReference>
<dbReference type="CDD" id="cd03709">
    <property type="entry name" value="lepA_C"/>
    <property type="match status" value="1"/>
</dbReference>
<dbReference type="FunFam" id="3.40.50.300:FF:000078">
    <property type="entry name" value="Elongation factor 4"/>
    <property type="match status" value="1"/>
</dbReference>
<dbReference type="FunFam" id="2.40.30.10:FF:000015">
    <property type="entry name" value="Translation factor GUF1, mitochondrial"/>
    <property type="match status" value="1"/>
</dbReference>
<dbReference type="FunFam" id="3.30.70.240:FF:000007">
    <property type="entry name" value="Translation factor GUF1, mitochondrial"/>
    <property type="match status" value="1"/>
</dbReference>
<dbReference type="FunFam" id="3.30.70.2570:FF:000001">
    <property type="entry name" value="Translation factor GUF1, mitochondrial"/>
    <property type="match status" value="1"/>
</dbReference>
<dbReference type="FunFam" id="3.30.70.870:FF:000004">
    <property type="entry name" value="Translation factor GUF1, mitochondrial"/>
    <property type="match status" value="1"/>
</dbReference>
<dbReference type="Gene3D" id="3.30.70.240">
    <property type="match status" value="1"/>
</dbReference>
<dbReference type="Gene3D" id="3.30.70.2570">
    <property type="entry name" value="Elongation factor 4, C-terminal domain"/>
    <property type="match status" value="1"/>
</dbReference>
<dbReference type="Gene3D" id="3.30.70.870">
    <property type="entry name" value="Elongation Factor G (Translational Gtpase), domain 3"/>
    <property type="match status" value="1"/>
</dbReference>
<dbReference type="Gene3D" id="3.40.50.300">
    <property type="entry name" value="P-loop containing nucleotide triphosphate hydrolases"/>
    <property type="match status" value="1"/>
</dbReference>
<dbReference type="Gene3D" id="2.40.30.10">
    <property type="entry name" value="Translation factors"/>
    <property type="match status" value="1"/>
</dbReference>
<dbReference type="HAMAP" id="MF_00071">
    <property type="entry name" value="LepA"/>
    <property type="match status" value="1"/>
</dbReference>
<dbReference type="InterPro" id="IPR006297">
    <property type="entry name" value="EF-4"/>
</dbReference>
<dbReference type="InterPro" id="IPR035647">
    <property type="entry name" value="EFG_III/V"/>
</dbReference>
<dbReference type="InterPro" id="IPR000640">
    <property type="entry name" value="EFG_V-like"/>
</dbReference>
<dbReference type="InterPro" id="IPR004161">
    <property type="entry name" value="EFTu-like_2"/>
</dbReference>
<dbReference type="InterPro" id="IPR031157">
    <property type="entry name" value="G_TR_CS"/>
</dbReference>
<dbReference type="InterPro" id="IPR038363">
    <property type="entry name" value="LepA_C_sf"/>
</dbReference>
<dbReference type="InterPro" id="IPR013842">
    <property type="entry name" value="LepA_CTD"/>
</dbReference>
<dbReference type="InterPro" id="IPR035654">
    <property type="entry name" value="LepA_IV"/>
</dbReference>
<dbReference type="InterPro" id="IPR027417">
    <property type="entry name" value="P-loop_NTPase"/>
</dbReference>
<dbReference type="InterPro" id="IPR005225">
    <property type="entry name" value="Small_GTP-bd"/>
</dbReference>
<dbReference type="InterPro" id="IPR000795">
    <property type="entry name" value="T_Tr_GTP-bd_dom"/>
</dbReference>
<dbReference type="InterPro" id="IPR009000">
    <property type="entry name" value="Transl_B-barrel_sf"/>
</dbReference>
<dbReference type="NCBIfam" id="TIGR01393">
    <property type="entry name" value="lepA"/>
    <property type="match status" value="1"/>
</dbReference>
<dbReference type="NCBIfam" id="TIGR00231">
    <property type="entry name" value="small_GTP"/>
    <property type="match status" value="1"/>
</dbReference>
<dbReference type="PANTHER" id="PTHR43512:SF4">
    <property type="entry name" value="TRANSLATION FACTOR GUF1 HOMOLOG, CHLOROPLASTIC"/>
    <property type="match status" value="1"/>
</dbReference>
<dbReference type="PANTHER" id="PTHR43512">
    <property type="entry name" value="TRANSLATION FACTOR GUF1-RELATED"/>
    <property type="match status" value="1"/>
</dbReference>
<dbReference type="Pfam" id="PF00679">
    <property type="entry name" value="EFG_C"/>
    <property type="match status" value="1"/>
</dbReference>
<dbReference type="Pfam" id="PF00009">
    <property type="entry name" value="GTP_EFTU"/>
    <property type="match status" value="1"/>
</dbReference>
<dbReference type="Pfam" id="PF03144">
    <property type="entry name" value="GTP_EFTU_D2"/>
    <property type="match status" value="1"/>
</dbReference>
<dbReference type="Pfam" id="PF06421">
    <property type="entry name" value="LepA_C"/>
    <property type="match status" value="1"/>
</dbReference>
<dbReference type="PRINTS" id="PR00315">
    <property type="entry name" value="ELONGATNFCT"/>
</dbReference>
<dbReference type="SMART" id="SM00838">
    <property type="entry name" value="EFG_C"/>
    <property type="match status" value="1"/>
</dbReference>
<dbReference type="SUPFAM" id="SSF54980">
    <property type="entry name" value="EF-G C-terminal domain-like"/>
    <property type="match status" value="2"/>
</dbReference>
<dbReference type="SUPFAM" id="SSF52540">
    <property type="entry name" value="P-loop containing nucleoside triphosphate hydrolases"/>
    <property type="match status" value="1"/>
</dbReference>
<dbReference type="SUPFAM" id="SSF50447">
    <property type="entry name" value="Translation proteins"/>
    <property type="match status" value="1"/>
</dbReference>
<dbReference type="PROSITE" id="PS00301">
    <property type="entry name" value="G_TR_1"/>
    <property type="match status" value="1"/>
</dbReference>
<dbReference type="PROSITE" id="PS51722">
    <property type="entry name" value="G_TR_2"/>
    <property type="match status" value="1"/>
</dbReference>
<accession>Q9JV65</accession>
<accession>A1IR17</accession>
<feature type="chain" id="PRO_0000176308" description="Elongation factor 4">
    <location>
        <begin position="1"/>
        <end position="597"/>
    </location>
</feature>
<feature type="domain" description="tr-type G">
    <location>
        <begin position="2"/>
        <end position="184"/>
    </location>
</feature>
<feature type="binding site" evidence="1">
    <location>
        <begin position="14"/>
        <end position="19"/>
    </location>
    <ligand>
        <name>GTP</name>
        <dbReference type="ChEBI" id="CHEBI:37565"/>
    </ligand>
</feature>
<feature type="binding site" evidence="1">
    <location>
        <begin position="131"/>
        <end position="134"/>
    </location>
    <ligand>
        <name>GTP</name>
        <dbReference type="ChEBI" id="CHEBI:37565"/>
    </ligand>
</feature>
<gene>
    <name evidence="1" type="primary">lepA</name>
    <name type="ordered locus">NMA0977</name>
</gene>
<name>LEPA_NEIMA</name>
<evidence type="ECO:0000255" key="1">
    <source>
        <dbReference type="HAMAP-Rule" id="MF_00071"/>
    </source>
</evidence>
<keyword id="KW-0997">Cell inner membrane</keyword>
<keyword id="KW-1003">Cell membrane</keyword>
<keyword id="KW-0342">GTP-binding</keyword>
<keyword id="KW-0378">Hydrolase</keyword>
<keyword id="KW-0472">Membrane</keyword>
<keyword id="KW-0547">Nucleotide-binding</keyword>
<keyword id="KW-0648">Protein biosynthesis</keyword>
<sequence length="597" mass="65999">MKNIRNFSIIAHIDHGKSTLADRFIQYCGGLDLREMSTQVLDSMDIEKERGITIKAQTAALNYKARDGQVYQLNLIDTPGHVDFSYEVSRSLSACEGALLVVDASQGVEAQTVANCYTAIDLGVEVVPVLNKIDLPAADPERVEQEIEDIIGIDAVGAVQCSAKSGIGVEDVLEEIVAKIPAPAGDENAPLQAVIVDSWFDNYVGVVMLIRVKNGTIKLKDKVRFMSTKAETQVEQLGVFTPKSVQKQELKAGEVGFLITGVKELGQAKVGDTVTLIANPASEPLPGFQEVQSQVFAGLYPVESHDYEALRDALEKLQLNDASLKFEPEVSQALGFGFRCGFLGLLHLEIVQERLEREFDMDLITTAPTVVYEVVLKNGEKIEVENPSKLPDIGSIETILEPIITATILVPQEYVGNVMTLCNQKRGVQVNMQYMGRQVMLTYDLPMNEVVMDFFDKLKSTSRGYASLDYHFKEFQPSDLIKLDIMVNGEKVDALSLIVHRQSAVHRGRELASKMRELIPRQMFDIAVQAAIGSQIIARENVKALRKNVLAKCYGGDITRKKKLLEKQKAGKRRMKQVGNVEIPQSAFLAILQVSDK</sequence>